<evidence type="ECO:0000250" key="1"/>
<evidence type="ECO:0000255" key="2"/>
<evidence type="ECO:0000255" key="3">
    <source>
        <dbReference type="PROSITE-ProRule" id="PRU00175"/>
    </source>
</evidence>
<evidence type="ECO:0000256" key="4">
    <source>
        <dbReference type="SAM" id="MobiDB-lite"/>
    </source>
</evidence>
<evidence type="ECO:0000305" key="5"/>
<proteinExistence type="evidence at transcript level"/>
<sequence length="324" mass="35942">MDDNRSTHSSMFGDLSTEEVTSKIILTAIIVLFMAVLFVLILHLYAKLYWWRIDQLQQQQQQQQQEQEQEEDQSSIAPPVVTRRQRRRFIFVPGQDALSNTGLTSFELSSLPIVFFRQDSCKDGLECSICLSELVKGDKARLLPKCNHSFHVECIDMWFQSHSTCPICRNTVLGPEQASSKRVEQVPDNAENAGTTNNNHDALSQLSTSSPEFPTNVLVWGRQDQVSTGNTNVGTQEDGAAGNGASQSQEAVVLDISDSSSRNHNVSSSSSSMRFIVEEEEAKSPMTTRLRSLRRFLSRDKRVGCSNSSTSNSSSSNAVASVDP</sequence>
<accession>Q9XF63</accession>
<organism>
    <name type="scientific">Arabidopsis thaliana</name>
    <name type="common">Mouse-ear cress</name>
    <dbReference type="NCBI Taxonomy" id="3702"/>
    <lineage>
        <taxon>Eukaryota</taxon>
        <taxon>Viridiplantae</taxon>
        <taxon>Streptophyta</taxon>
        <taxon>Embryophyta</taxon>
        <taxon>Tracheophyta</taxon>
        <taxon>Spermatophyta</taxon>
        <taxon>Magnoliopsida</taxon>
        <taxon>eudicotyledons</taxon>
        <taxon>Gunneridae</taxon>
        <taxon>Pentapetalae</taxon>
        <taxon>rosids</taxon>
        <taxon>malvids</taxon>
        <taxon>Brassicales</taxon>
        <taxon>Brassicaceae</taxon>
        <taxon>Camelineae</taxon>
        <taxon>Arabidopsis</taxon>
    </lineage>
</organism>
<feature type="chain" id="PRO_0000055772" description="RING-H2 finger protein ATL3">
    <location>
        <begin position="1"/>
        <end position="324"/>
    </location>
</feature>
<feature type="transmembrane region" description="Helical" evidence="2">
    <location>
        <begin position="24"/>
        <end position="44"/>
    </location>
</feature>
<feature type="zinc finger region" description="RING-type; atypical" evidence="3">
    <location>
        <begin position="127"/>
        <end position="169"/>
    </location>
</feature>
<feature type="region of interest" description="Disordered" evidence="4">
    <location>
        <begin position="179"/>
        <end position="210"/>
    </location>
</feature>
<feature type="region of interest" description="Disordered" evidence="4">
    <location>
        <begin position="226"/>
        <end position="248"/>
    </location>
</feature>
<feature type="region of interest" description="Disordered" evidence="4">
    <location>
        <begin position="299"/>
        <end position="324"/>
    </location>
</feature>
<feature type="compositionally biased region" description="Polar residues" evidence="4">
    <location>
        <begin position="192"/>
        <end position="210"/>
    </location>
</feature>
<feature type="compositionally biased region" description="Polar residues" evidence="4">
    <location>
        <begin position="226"/>
        <end position="235"/>
    </location>
</feature>
<feature type="compositionally biased region" description="Low complexity" evidence="4">
    <location>
        <begin position="306"/>
        <end position="324"/>
    </location>
</feature>
<gene>
    <name type="primary">ATL3</name>
    <name type="ordered locus">At1g72310</name>
    <name type="ORF">T10D10.22</name>
    <name type="ORF">T9N14.21</name>
</gene>
<protein>
    <recommendedName>
        <fullName>RING-H2 finger protein ATL3</fullName>
        <ecNumber evidence="5">2.3.2.27</ecNumber>
    </recommendedName>
    <alternativeName>
        <fullName evidence="5">RING-type E3 ubiquitin transferase ATL3</fullName>
    </alternativeName>
</protein>
<keyword id="KW-0472">Membrane</keyword>
<keyword id="KW-0479">Metal-binding</keyword>
<keyword id="KW-1185">Reference proteome</keyword>
<keyword id="KW-0808">Transferase</keyword>
<keyword id="KW-0812">Transmembrane</keyword>
<keyword id="KW-1133">Transmembrane helix</keyword>
<keyword id="KW-0833">Ubl conjugation pathway</keyword>
<keyword id="KW-0862">Zinc</keyword>
<keyword id="KW-0863">Zinc-finger</keyword>
<dbReference type="EC" id="2.3.2.27" evidence="5"/>
<dbReference type="EMBL" id="AF132013">
    <property type="protein sequence ID" value="AAD33581.1"/>
    <property type="molecule type" value="mRNA"/>
</dbReference>
<dbReference type="EMBL" id="AC016529">
    <property type="protein sequence ID" value="AAG52584.1"/>
    <property type="molecule type" value="Genomic_DNA"/>
</dbReference>
<dbReference type="EMBL" id="AC067754">
    <property type="protein sequence ID" value="AAG51805.1"/>
    <property type="molecule type" value="Genomic_DNA"/>
</dbReference>
<dbReference type="EMBL" id="CP002684">
    <property type="protein sequence ID" value="AEE35301.1"/>
    <property type="molecule type" value="Genomic_DNA"/>
</dbReference>
<dbReference type="EMBL" id="BT010140">
    <property type="protein sequence ID" value="AAQ22609.1"/>
    <property type="molecule type" value="mRNA"/>
</dbReference>
<dbReference type="PIR" id="H96746">
    <property type="entry name" value="H96746"/>
</dbReference>
<dbReference type="RefSeq" id="NP_177375.1">
    <property type="nucleotide sequence ID" value="NM_105890.2"/>
</dbReference>
<dbReference type="SMR" id="Q9XF63"/>
<dbReference type="BioGRID" id="28783">
    <property type="interactions" value="3"/>
</dbReference>
<dbReference type="FunCoup" id="Q9XF63">
    <property type="interactions" value="331"/>
</dbReference>
<dbReference type="IntAct" id="Q9XF63">
    <property type="interactions" value="3"/>
</dbReference>
<dbReference type="STRING" id="3702.Q9XF63"/>
<dbReference type="PaxDb" id="3702-AT1G72310.1"/>
<dbReference type="ProteomicsDB" id="246636"/>
<dbReference type="EnsemblPlants" id="AT1G72310.1">
    <property type="protein sequence ID" value="AT1G72310.1"/>
    <property type="gene ID" value="AT1G72310"/>
</dbReference>
<dbReference type="GeneID" id="843563"/>
<dbReference type="Gramene" id="AT1G72310.1">
    <property type="protein sequence ID" value="AT1G72310.1"/>
    <property type="gene ID" value="AT1G72310"/>
</dbReference>
<dbReference type="KEGG" id="ath:AT1G72310"/>
<dbReference type="Araport" id="AT1G72310"/>
<dbReference type="TAIR" id="AT1G72310">
    <property type="gene designation" value="ATL3"/>
</dbReference>
<dbReference type="eggNOG" id="KOG0800">
    <property type="taxonomic scope" value="Eukaryota"/>
</dbReference>
<dbReference type="HOGENOM" id="CLU_066543_1_0_1"/>
<dbReference type="InParanoid" id="Q9XF63"/>
<dbReference type="OMA" id="LYWWRID"/>
<dbReference type="OrthoDB" id="8062037at2759"/>
<dbReference type="PhylomeDB" id="Q9XF63"/>
<dbReference type="UniPathway" id="UPA00143"/>
<dbReference type="PRO" id="PR:Q9XF63"/>
<dbReference type="Proteomes" id="UP000006548">
    <property type="component" value="Chromosome 1"/>
</dbReference>
<dbReference type="ExpressionAtlas" id="Q9XF63">
    <property type="expression patterns" value="baseline and differential"/>
</dbReference>
<dbReference type="GO" id="GO:0016020">
    <property type="term" value="C:membrane"/>
    <property type="evidence" value="ECO:0007669"/>
    <property type="project" value="UniProtKB-SubCell"/>
</dbReference>
<dbReference type="GO" id="GO:0016740">
    <property type="term" value="F:transferase activity"/>
    <property type="evidence" value="ECO:0007669"/>
    <property type="project" value="UniProtKB-KW"/>
</dbReference>
<dbReference type="GO" id="GO:0008270">
    <property type="term" value="F:zinc ion binding"/>
    <property type="evidence" value="ECO:0007669"/>
    <property type="project" value="UniProtKB-KW"/>
</dbReference>
<dbReference type="GO" id="GO:0016567">
    <property type="term" value="P:protein ubiquitination"/>
    <property type="evidence" value="ECO:0007669"/>
    <property type="project" value="UniProtKB-UniPathway"/>
</dbReference>
<dbReference type="CDD" id="cd16461">
    <property type="entry name" value="RING-H2_EL5-like"/>
    <property type="match status" value="1"/>
</dbReference>
<dbReference type="FunFam" id="3.30.40.10:FF:000475">
    <property type="entry name" value="RING-H2 finger protein ATL3"/>
    <property type="match status" value="1"/>
</dbReference>
<dbReference type="Gene3D" id="3.30.40.10">
    <property type="entry name" value="Zinc/RING finger domain, C3HC4 (zinc finger)"/>
    <property type="match status" value="1"/>
</dbReference>
<dbReference type="InterPro" id="IPR001841">
    <property type="entry name" value="Znf_RING"/>
</dbReference>
<dbReference type="InterPro" id="IPR013083">
    <property type="entry name" value="Znf_RING/FYVE/PHD"/>
</dbReference>
<dbReference type="PANTHER" id="PTHR45676:SF132">
    <property type="entry name" value="RING-H2 FINGER PROTEIN ATL3"/>
    <property type="match status" value="1"/>
</dbReference>
<dbReference type="PANTHER" id="PTHR45676">
    <property type="entry name" value="RING-H2 FINGER PROTEIN ATL51-RELATED"/>
    <property type="match status" value="1"/>
</dbReference>
<dbReference type="Pfam" id="PF13639">
    <property type="entry name" value="zf-RING_2"/>
    <property type="match status" value="1"/>
</dbReference>
<dbReference type="SMART" id="SM00184">
    <property type="entry name" value="RING"/>
    <property type="match status" value="1"/>
</dbReference>
<dbReference type="SUPFAM" id="SSF57850">
    <property type="entry name" value="RING/U-box"/>
    <property type="match status" value="1"/>
</dbReference>
<dbReference type="PROSITE" id="PS50089">
    <property type="entry name" value="ZF_RING_2"/>
    <property type="match status" value="1"/>
</dbReference>
<reference key="1">
    <citation type="journal article" date="1999" name="Plant Mol. Biol.">
        <title>Early elicitor induction in members of a novel multigene family coding for highly related RING-H2 proteins in Arabidopsis thaliana.</title>
        <authorList>
            <person name="Salinas-Mondragon R.E."/>
            <person name="Garciduenas-Pina C."/>
            <person name="Guzman P."/>
        </authorList>
    </citation>
    <scope>NUCLEOTIDE SEQUENCE [MRNA]</scope>
</reference>
<reference key="2">
    <citation type="journal article" date="2000" name="Nature">
        <title>Sequence and analysis of chromosome 1 of the plant Arabidopsis thaliana.</title>
        <authorList>
            <person name="Theologis A."/>
            <person name="Ecker J.R."/>
            <person name="Palm C.J."/>
            <person name="Federspiel N.A."/>
            <person name="Kaul S."/>
            <person name="White O."/>
            <person name="Alonso J."/>
            <person name="Altafi H."/>
            <person name="Araujo R."/>
            <person name="Bowman C.L."/>
            <person name="Brooks S.Y."/>
            <person name="Buehler E."/>
            <person name="Chan A."/>
            <person name="Chao Q."/>
            <person name="Chen H."/>
            <person name="Cheuk R.F."/>
            <person name="Chin C.W."/>
            <person name="Chung M.K."/>
            <person name="Conn L."/>
            <person name="Conway A.B."/>
            <person name="Conway A.R."/>
            <person name="Creasy T.H."/>
            <person name="Dewar K."/>
            <person name="Dunn P."/>
            <person name="Etgu P."/>
            <person name="Feldblyum T.V."/>
            <person name="Feng J.-D."/>
            <person name="Fong B."/>
            <person name="Fujii C.Y."/>
            <person name="Gill J.E."/>
            <person name="Goldsmith A.D."/>
            <person name="Haas B."/>
            <person name="Hansen N.F."/>
            <person name="Hughes B."/>
            <person name="Huizar L."/>
            <person name="Hunter J.L."/>
            <person name="Jenkins J."/>
            <person name="Johnson-Hopson C."/>
            <person name="Khan S."/>
            <person name="Khaykin E."/>
            <person name="Kim C.J."/>
            <person name="Koo H.L."/>
            <person name="Kremenetskaia I."/>
            <person name="Kurtz D.B."/>
            <person name="Kwan A."/>
            <person name="Lam B."/>
            <person name="Langin-Hooper S."/>
            <person name="Lee A."/>
            <person name="Lee J.M."/>
            <person name="Lenz C.A."/>
            <person name="Li J.H."/>
            <person name="Li Y.-P."/>
            <person name="Lin X."/>
            <person name="Liu S.X."/>
            <person name="Liu Z.A."/>
            <person name="Luros J.S."/>
            <person name="Maiti R."/>
            <person name="Marziali A."/>
            <person name="Militscher J."/>
            <person name="Miranda M."/>
            <person name="Nguyen M."/>
            <person name="Nierman W.C."/>
            <person name="Osborne B.I."/>
            <person name="Pai G."/>
            <person name="Peterson J."/>
            <person name="Pham P.K."/>
            <person name="Rizzo M."/>
            <person name="Rooney T."/>
            <person name="Rowley D."/>
            <person name="Sakano H."/>
            <person name="Salzberg S.L."/>
            <person name="Schwartz J.R."/>
            <person name="Shinn P."/>
            <person name="Southwick A.M."/>
            <person name="Sun H."/>
            <person name="Tallon L.J."/>
            <person name="Tambunga G."/>
            <person name="Toriumi M.J."/>
            <person name="Town C.D."/>
            <person name="Utterback T."/>
            <person name="Van Aken S."/>
            <person name="Vaysberg M."/>
            <person name="Vysotskaia V.S."/>
            <person name="Walker M."/>
            <person name="Wu D."/>
            <person name="Yu G."/>
            <person name="Fraser C.M."/>
            <person name="Venter J.C."/>
            <person name="Davis R.W."/>
        </authorList>
    </citation>
    <scope>NUCLEOTIDE SEQUENCE [LARGE SCALE GENOMIC DNA]</scope>
    <source>
        <strain>cv. Columbia</strain>
    </source>
</reference>
<reference key="3">
    <citation type="journal article" date="2017" name="Plant J.">
        <title>Araport11: a complete reannotation of the Arabidopsis thaliana reference genome.</title>
        <authorList>
            <person name="Cheng C.Y."/>
            <person name="Krishnakumar V."/>
            <person name="Chan A.P."/>
            <person name="Thibaud-Nissen F."/>
            <person name="Schobel S."/>
            <person name="Town C.D."/>
        </authorList>
    </citation>
    <scope>GENOME REANNOTATION</scope>
    <source>
        <strain>cv. Columbia</strain>
    </source>
</reference>
<reference key="4">
    <citation type="journal article" date="2003" name="Science">
        <title>Empirical analysis of transcriptional activity in the Arabidopsis genome.</title>
        <authorList>
            <person name="Yamada K."/>
            <person name="Lim J."/>
            <person name="Dale J.M."/>
            <person name="Chen H."/>
            <person name="Shinn P."/>
            <person name="Palm C.J."/>
            <person name="Southwick A.M."/>
            <person name="Wu H.C."/>
            <person name="Kim C.J."/>
            <person name="Nguyen M."/>
            <person name="Pham P.K."/>
            <person name="Cheuk R.F."/>
            <person name="Karlin-Newmann G."/>
            <person name="Liu S.X."/>
            <person name="Lam B."/>
            <person name="Sakano H."/>
            <person name="Wu T."/>
            <person name="Yu G."/>
            <person name="Miranda M."/>
            <person name="Quach H.L."/>
            <person name="Tripp M."/>
            <person name="Chang C.H."/>
            <person name="Lee J.M."/>
            <person name="Toriumi M.J."/>
            <person name="Chan M.M."/>
            <person name="Tang C.C."/>
            <person name="Onodera C.S."/>
            <person name="Deng J.M."/>
            <person name="Akiyama K."/>
            <person name="Ansari Y."/>
            <person name="Arakawa T."/>
            <person name="Banh J."/>
            <person name="Banno F."/>
            <person name="Bowser L."/>
            <person name="Brooks S.Y."/>
            <person name="Carninci P."/>
            <person name="Chao Q."/>
            <person name="Choy N."/>
            <person name="Enju A."/>
            <person name="Goldsmith A.D."/>
            <person name="Gurjal M."/>
            <person name="Hansen N.F."/>
            <person name="Hayashizaki Y."/>
            <person name="Johnson-Hopson C."/>
            <person name="Hsuan V.W."/>
            <person name="Iida K."/>
            <person name="Karnes M."/>
            <person name="Khan S."/>
            <person name="Koesema E."/>
            <person name="Ishida J."/>
            <person name="Jiang P.X."/>
            <person name="Jones T."/>
            <person name="Kawai J."/>
            <person name="Kamiya A."/>
            <person name="Meyers C."/>
            <person name="Nakajima M."/>
            <person name="Narusaka M."/>
            <person name="Seki M."/>
            <person name="Sakurai T."/>
            <person name="Satou M."/>
            <person name="Tamse R."/>
            <person name="Vaysberg M."/>
            <person name="Wallender E.K."/>
            <person name="Wong C."/>
            <person name="Yamamura Y."/>
            <person name="Yuan S."/>
            <person name="Shinozaki K."/>
            <person name="Davis R.W."/>
            <person name="Theologis A."/>
            <person name="Ecker J.R."/>
        </authorList>
    </citation>
    <scope>NUCLEOTIDE SEQUENCE [LARGE SCALE MRNA]</scope>
    <source>
        <strain>cv. Columbia</strain>
    </source>
</reference>
<reference key="5">
    <citation type="journal article" date="2002" name="Genome Biol.">
        <title>Evaluation and classification of RING-finger domains encoded by the Arabidopsis genome.</title>
        <authorList>
            <person name="Kosarev P."/>
            <person name="Mayer K.F.X."/>
            <person name="Hardtke C.S."/>
        </authorList>
    </citation>
    <scope>GENE FAMILY ORGANIZATION</scope>
</reference>
<reference key="6">
    <citation type="journal article" date="2006" name="J. Mol. Evol.">
        <title>The ATL gene family from Arabidopsis thaliana and Oryza sativa comprises a large number of putative ubiquitin ligases of the RING-H2 type.</title>
        <authorList>
            <person name="Serrano M."/>
            <person name="Parra S."/>
            <person name="Alcaraz L.D."/>
            <person name="Guzman P."/>
        </authorList>
    </citation>
    <scope>NOMENCLATURE</scope>
    <scope>GENE FAMILY ORGANIZATION</scope>
</reference>
<name>ATL3_ARATH</name>
<comment type="catalytic activity">
    <reaction evidence="5">
        <text>S-ubiquitinyl-[E2 ubiquitin-conjugating enzyme]-L-cysteine + [acceptor protein]-L-lysine = [E2 ubiquitin-conjugating enzyme]-L-cysteine + N(6)-ubiquitinyl-[acceptor protein]-L-lysine.</text>
        <dbReference type="EC" id="2.3.2.27"/>
    </reaction>
</comment>
<comment type="pathway">
    <text>Protein modification; protein ubiquitination.</text>
</comment>
<comment type="subcellular location">
    <subcellularLocation>
        <location evidence="5">Membrane</location>
        <topology evidence="5">Single-pass membrane protein</topology>
    </subcellularLocation>
</comment>
<comment type="domain">
    <text evidence="1">The RING-type zinc finger domain mediates binding to an E2 ubiquitin-conjugating enzyme.</text>
</comment>
<comment type="similarity">
    <text evidence="5">Belongs to the RING-type zinc finger family. ATL subfamily.</text>
</comment>